<comment type="function">
    <text evidence="1">The coatomer is a cytosolic protein complex that binds to dilysine motifs and reversibly associates with Golgi non-clathrin-coated vesicles, which further mediate biosynthetic protein transport from the ER, via the Golgi up to the trans Golgi network. Coatomer complex is required for budding from Golgi membranes, and is essential for the retrograde Golgi-to-ER transport of dilysine-tagged proteins (By similarity).</text>
</comment>
<comment type="subunit">
    <text evidence="1">Oligomeric complex that consists of at least the alpha, beta, beta', gamma, delta, epsilon and zeta subunits.</text>
</comment>
<comment type="subcellular location">
    <subcellularLocation>
        <location evidence="1">Cytoplasm</location>
    </subcellularLocation>
    <subcellularLocation>
        <location evidence="1">Golgi apparatus membrane</location>
        <topology evidence="1">Peripheral membrane protein</topology>
        <orientation evidence="1">Cytoplasmic side</orientation>
    </subcellularLocation>
    <subcellularLocation>
        <location evidence="1">Cytoplasmic vesicle</location>
        <location evidence="1">COPI-coated vesicle membrane</location>
        <topology evidence="1">Peripheral membrane protein</topology>
        <orientation evidence="1">Cytoplasmic side</orientation>
    </subcellularLocation>
    <text evidence="1">The coatomer is cytoplasmic or polymerized on the cytoplasmic side of the Golgi, as well as on the vesicles/buds originating from it.</text>
</comment>
<comment type="similarity">
    <text evidence="3">Belongs to the COPG family.</text>
</comment>
<name>COPG_SCHPO</name>
<accession>P87140</accession>
<reference key="1">
    <citation type="journal article" date="2002" name="Nature">
        <title>The genome sequence of Schizosaccharomyces pombe.</title>
        <authorList>
            <person name="Wood V."/>
            <person name="Gwilliam R."/>
            <person name="Rajandream M.A."/>
            <person name="Lyne M.H."/>
            <person name="Lyne R."/>
            <person name="Stewart A."/>
            <person name="Sgouros J.G."/>
            <person name="Peat N."/>
            <person name="Hayles J."/>
            <person name="Baker S.G."/>
            <person name="Basham D."/>
            <person name="Bowman S."/>
            <person name="Brooks K."/>
            <person name="Brown D."/>
            <person name="Brown S."/>
            <person name="Chillingworth T."/>
            <person name="Churcher C.M."/>
            <person name="Collins M."/>
            <person name="Connor R."/>
            <person name="Cronin A."/>
            <person name="Davis P."/>
            <person name="Feltwell T."/>
            <person name="Fraser A."/>
            <person name="Gentles S."/>
            <person name="Goble A."/>
            <person name="Hamlin N."/>
            <person name="Harris D.E."/>
            <person name="Hidalgo J."/>
            <person name="Hodgson G."/>
            <person name="Holroyd S."/>
            <person name="Hornsby T."/>
            <person name="Howarth S."/>
            <person name="Huckle E.J."/>
            <person name="Hunt S."/>
            <person name="Jagels K."/>
            <person name="James K.D."/>
            <person name="Jones L."/>
            <person name="Jones M."/>
            <person name="Leather S."/>
            <person name="McDonald S."/>
            <person name="McLean J."/>
            <person name="Mooney P."/>
            <person name="Moule S."/>
            <person name="Mungall K.L."/>
            <person name="Murphy L.D."/>
            <person name="Niblett D."/>
            <person name="Odell C."/>
            <person name="Oliver K."/>
            <person name="O'Neil S."/>
            <person name="Pearson D."/>
            <person name="Quail M.A."/>
            <person name="Rabbinowitsch E."/>
            <person name="Rutherford K.M."/>
            <person name="Rutter S."/>
            <person name="Saunders D."/>
            <person name="Seeger K."/>
            <person name="Sharp S."/>
            <person name="Skelton J."/>
            <person name="Simmonds M.N."/>
            <person name="Squares R."/>
            <person name="Squares S."/>
            <person name="Stevens K."/>
            <person name="Taylor K."/>
            <person name="Taylor R.G."/>
            <person name="Tivey A."/>
            <person name="Walsh S.V."/>
            <person name="Warren T."/>
            <person name="Whitehead S."/>
            <person name="Woodward J.R."/>
            <person name="Volckaert G."/>
            <person name="Aert R."/>
            <person name="Robben J."/>
            <person name="Grymonprez B."/>
            <person name="Weltjens I."/>
            <person name="Vanstreels E."/>
            <person name="Rieger M."/>
            <person name="Schaefer M."/>
            <person name="Mueller-Auer S."/>
            <person name="Gabel C."/>
            <person name="Fuchs M."/>
            <person name="Duesterhoeft A."/>
            <person name="Fritzc C."/>
            <person name="Holzer E."/>
            <person name="Moestl D."/>
            <person name="Hilbert H."/>
            <person name="Borzym K."/>
            <person name="Langer I."/>
            <person name="Beck A."/>
            <person name="Lehrach H."/>
            <person name="Reinhardt R."/>
            <person name="Pohl T.M."/>
            <person name="Eger P."/>
            <person name="Zimmermann W."/>
            <person name="Wedler H."/>
            <person name="Wambutt R."/>
            <person name="Purnelle B."/>
            <person name="Goffeau A."/>
            <person name="Cadieu E."/>
            <person name="Dreano S."/>
            <person name="Gloux S."/>
            <person name="Lelaure V."/>
            <person name="Mottier S."/>
            <person name="Galibert F."/>
            <person name="Aves S.J."/>
            <person name="Xiang Z."/>
            <person name="Hunt C."/>
            <person name="Moore K."/>
            <person name="Hurst S.M."/>
            <person name="Lucas M."/>
            <person name="Rochet M."/>
            <person name="Gaillardin C."/>
            <person name="Tallada V.A."/>
            <person name="Garzon A."/>
            <person name="Thode G."/>
            <person name="Daga R.R."/>
            <person name="Cruzado L."/>
            <person name="Jimenez J."/>
            <person name="Sanchez M."/>
            <person name="del Rey F."/>
            <person name="Benito J."/>
            <person name="Dominguez A."/>
            <person name="Revuelta J.L."/>
            <person name="Moreno S."/>
            <person name="Armstrong J."/>
            <person name="Forsburg S.L."/>
            <person name="Cerutti L."/>
            <person name="Lowe T."/>
            <person name="McCombie W.R."/>
            <person name="Paulsen I."/>
            <person name="Potashkin J."/>
            <person name="Shpakovski G.V."/>
            <person name="Ussery D."/>
            <person name="Barrell B.G."/>
            <person name="Nurse P."/>
        </authorList>
    </citation>
    <scope>NUCLEOTIDE SEQUENCE [LARGE SCALE GENOMIC DNA]</scope>
    <source>
        <strain>972 / ATCC 24843</strain>
    </source>
</reference>
<reference key="2">
    <citation type="journal article" date="2008" name="J. Proteome Res.">
        <title>Phosphoproteome analysis of fission yeast.</title>
        <authorList>
            <person name="Wilson-Grady J.T."/>
            <person name="Villen J."/>
            <person name="Gygi S.P."/>
        </authorList>
    </citation>
    <scope>PHOSPHORYLATION [LARGE SCALE ANALYSIS] AT SER-604</scope>
    <scope>IDENTIFICATION BY MASS SPECTROMETRY</scope>
</reference>
<feature type="chain" id="PRO_0000193860" description="Probable coatomer subunit gamma">
    <location>
        <begin position="1"/>
        <end position="905"/>
    </location>
</feature>
<feature type="repeat" description="HEAT 1">
    <location>
        <begin position="265"/>
        <end position="302"/>
    </location>
</feature>
<feature type="repeat" description="HEAT 2">
    <location>
        <begin position="303"/>
        <end position="340"/>
    </location>
</feature>
<feature type="repeat" description="HEAT 3">
    <location>
        <begin position="374"/>
        <end position="412"/>
    </location>
</feature>
<feature type="repeat" description="HEAT 4">
    <location>
        <begin position="414"/>
        <end position="450"/>
    </location>
</feature>
<feature type="repeat" description="HEAT 5">
    <location>
        <begin position="525"/>
        <end position="563"/>
    </location>
</feature>
<feature type="modified residue" description="Phosphoserine" evidence="2">
    <location>
        <position position="604"/>
    </location>
</feature>
<protein>
    <recommendedName>
        <fullName>Probable coatomer subunit gamma</fullName>
    </recommendedName>
    <alternativeName>
        <fullName>Gamma-coat protein</fullName>
        <shortName>Gamma-COP</shortName>
    </alternativeName>
</protein>
<sequence length="905" mass="100936">MSYSKKDDDGDESIFANVNQVTVTQDARAFNSSSISPRKSRRLLSKIAYLIYTGEHFQEKQATELFFGITKLFQHKDPSLRQFVYIIIKELSVVAEDVIMITSSIMKDTATGRETIYRPNAIRSLIRVIDANTVPAIERILTTGIVDPISAVASAALVSAYHLYPVAKDIVSRWNNEVQDAVTSHNVGRKVASSPFFTSTLGYTPNASGISQYHALGLLYRIRRHDSIAMNKLLQLLVSNLGTVSNSHAFVMLIRYISSLMDQNTQFRDQMVPFLHGWLKSKGDMVNLEVARNMVRLKNISDDDLQPVVSVLKIFLSSHRSATRFSAIRTLNELAMTRPHLVHSCNLNIESLITDVNRSIATYAITTLLKTGNDESVDRLMKQIVTFMSDISDNFKIIVVDAIRSLCLKFPRKQDSMLTFLSNILCDEGGYEFKRAAVDAISDMIKYIPESKERALAELCEFIEDCEYPKIAVRILSILGEEGPKASEPTRFIRYIYNRIMLENAIVRSAAVSALTKFGLNAEDKFVQRSVKVILTRCLEDADDEVRDRAAFSVKALEDRDAFLPVVKSDKIPSLPALERSLVIYISERKFGQGFDIKSVPVLSQEEIDAENLRIKKATTEVEFTEVTPAEDQNALASSNIETEFLNALESVSEFNEYGPVLKSSPSPIELTEQETEFVVKVVKHVFKDHLVVQFQLHNTLSEVILENAVVVSTPSTDDLVEECVVPAAIVSGEPVSIFVSFKFNDSVPYPLTTLTNTLQFTTKEIDIHTGEPEEEGYEDEYKIDDLDVSAGDFISPAYESNFDGLFDSLEHEASEVYVLSLLDSFRSTCSRVAELLQMQPLEGTENPTDKPVHVMKLSGKLVNGEKVLALVKMAHSKDGEGITIKVIARGESDSSVELVVGGIA</sequence>
<gene>
    <name type="primary">sec21</name>
    <name type="ORF">SPAC57A7.10c</name>
</gene>
<organism>
    <name type="scientific">Schizosaccharomyces pombe (strain 972 / ATCC 24843)</name>
    <name type="common">Fission yeast</name>
    <dbReference type="NCBI Taxonomy" id="284812"/>
    <lineage>
        <taxon>Eukaryota</taxon>
        <taxon>Fungi</taxon>
        <taxon>Dikarya</taxon>
        <taxon>Ascomycota</taxon>
        <taxon>Taphrinomycotina</taxon>
        <taxon>Schizosaccharomycetes</taxon>
        <taxon>Schizosaccharomycetales</taxon>
        <taxon>Schizosaccharomycetaceae</taxon>
        <taxon>Schizosaccharomyces</taxon>
    </lineage>
</organism>
<keyword id="KW-0963">Cytoplasm</keyword>
<keyword id="KW-0968">Cytoplasmic vesicle</keyword>
<keyword id="KW-0931">ER-Golgi transport</keyword>
<keyword id="KW-0333">Golgi apparatus</keyword>
<keyword id="KW-0472">Membrane</keyword>
<keyword id="KW-0597">Phosphoprotein</keyword>
<keyword id="KW-0653">Protein transport</keyword>
<keyword id="KW-1185">Reference proteome</keyword>
<keyword id="KW-0677">Repeat</keyword>
<keyword id="KW-0813">Transport</keyword>
<proteinExistence type="evidence at protein level"/>
<evidence type="ECO:0000250" key="1"/>
<evidence type="ECO:0000269" key="2">
    <source>
    </source>
</evidence>
<evidence type="ECO:0000305" key="3"/>
<dbReference type="EMBL" id="CU329670">
    <property type="protein sequence ID" value="CAB08768.1"/>
    <property type="molecule type" value="Genomic_DNA"/>
</dbReference>
<dbReference type="PIR" id="T38944">
    <property type="entry name" value="T38944"/>
</dbReference>
<dbReference type="RefSeq" id="NP_593371.1">
    <property type="nucleotide sequence ID" value="NM_001018803.2"/>
</dbReference>
<dbReference type="SMR" id="P87140"/>
<dbReference type="BioGRID" id="278717">
    <property type="interactions" value="5"/>
</dbReference>
<dbReference type="FunCoup" id="P87140">
    <property type="interactions" value="682"/>
</dbReference>
<dbReference type="STRING" id="284812.P87140"/>
<dbReference type="iPTMnet" id="P87140"/>
<dbReference type="PaxDb" id="4896-SPAC57A7.10c.1"/>
<dbReference type="EnsemblFungi" id="SPAC57A7.10c.1">
    <property type="protein sequence ID" value="SPAC57A7.10c.1:pep"/>
    <property type="gene ID" value="SPAC57A7.10c"/>
</dbReference>
<dbReference type="GeneID" id="2542247"/>
<dbReference type="KEGG" id="spo:2542247"/>
<dbReference type="PomBase" id="SPAC57A7.10c">
    <property type="gene designation" value="sec21"/>
</dbReference>
<dbReference type="VEuPathDB" id="FungiDB:SPAC57A7.10c"/>
<dbReference type="eggNOG" id="KOG1078">
    <property type="taxonomic scope" value="Eukaryota"/>
</dbReference>
<dbReference type="HOGENOM" id="CLU_010353_2_0_1"/>
<dbReference type="InParanoid" id="P87140"/>
<dbReference type="OMA" id="DFIEDCE"/>
<dbReference type="PhylomeDB" id="P87140"/>
<dbReference type="Reactome" id="R-SPO-6807878">
    <property type="pathway name" value="COPI-mediated anterograde transport"/>
</dbReference>
<dbReference type="Reactome" id="R-SPO-6811434">
    <property type="pathway name" value="COPI-dependent Golgi-to-ER retrograde traffic"/>
</dbReference>
<dbReference type="PRO" id="PR:P87140"/>
<dbReference type="Proteomes" id="UP000002485">
    <property type="component" value="Chromosome I"/>
</dbReference>
<dbReference type="GO" id="GO:0030126">
    <property type="term" value="C:COPI vesicle coat"/>
    <property type="evidence" value="ECO:0000318"/>
    <property type="project" value="GO_Central"/>
</dbReference>
<dbReference type="GO" id="GO:0005829">
    <property type="term" value="C:cytosol"/>
    <property type="evidence" value="ECO:0007005"/>
    <property type="project" value="PomBase"/>
</dbReference>
<dbReference type="GO" id="GO:0005783">
    <property type="term" value="C:endoplasmic reticulum"/>
    <property type="evidence" value="ECO:0000318"/>
    <property type="project" value="GO_Central"/>
</dbReference>
<dbReference type="GO" id="GO:0005793">
    <property type="term" value="C:endoplasmic reticulum-Golgi intermediate compartment"/>
    <property type="evidence" value="ECO:0000318"/>
    <property type="project" value="GO_Central"/>
</dbReference>
<dbReference type="GO" id="GO:0000139">
    <property type="term" value="C:Golgi membrane"/>
    <property type="evidence" value="ECO:0000318"/>
    <property type="project" value="GO_Central"/>
</dbReference>
<dbReference type="GO" id="GO:0005198">
    <property type="term" value="F:structural molecule activity"/>
    <property type="evidence" value="ECO:0007669"/>
    <property type="project" value="InterPro"/>
</dbReference>
<dbReference type="GO" id="GO:0006888">
    <property type="term" value="P:endoplasmic reticulum to Golgi vesicle-mediated transport"/>
    <property type="evidence" value="ECO:0000318"/>
    <property type="project" value="GO_Central"/>
</dbReference>
<dbReference type="GO" id="GO:0006891">
    <property type="term" value="P:intra-Golgi vesicle-mediated transport"/>
    <property type="evidence" value="ECO:0000318"/>
    <property type="project" value="GO_Central"/>
</dbReference>
<dbReference type="GO" id="GO:0006886">
    <property type="term" value="P:intracellular protein transport"/>
    <property type="evidence" value="ECO:0000305"/>
    <property type="project" value="PomBase"/>
</dbReference>
<dbReference type="GO" id="GO:0009306">
    <property type="term" value="P:protein secretion"/>
    <property type="evidence" value="ECO:0000318"/>
    <property type="project" value="GO_Central"/>
</dbReference>
<dbReference type="GO" id="GO:0006890">
    <property type="term" value="P:retrograde vesicle-mediated transport, Golgi to endoplasmic reticulum"/>
    <property type="evidence" value="ECO:0000266"/>
    <property type="project" value="PomBase"/>
</dbReference>
<dbReference type="FunFam" id="1.25.10.10:FF:000071">
    <property type="entry name" value="Coatomer subunit gamma"/>
    <property type="match status" value="1"/>
</dbReference>
<dbReference type="FunFam" id="1.25.10.10:FF:000382">
    <property type="entry name" value="Coatomer subunit gamma"/>
    <property type="match status" value="1"/>
</dbReference>
<dbReference type="FunFam" id="2.60.40.1480:FF:000001">
    <property type="entry name" value="Coatomer subunit gamma"/>
    <property type="match status" value="1"/>
</dbReference>
<dbReference type="FunFam" id="3.30.310.10:FF:000008">
    <property type="entry name" value="Coatomer subunit gamma"/>
    <property type="match status" value="1"/>
</dbReference>
<dbReference type="Gene3D" id="2.60.40.1480">
    <property type="entry name" value="Coatomer, gamma subunit, appendage domain"/>
    <property type="match status" value="1"/>
</dbReference>
<dbReference type="Gene3D" id="1.25.10.10">
    <property type="entry name" value="Leucine-rich Repeat Variant"/>
    <property type="match status" value="2"/>
</dbReference>
<dbReference type="Gene3D" id="3.30.310.10">
    <property type="entry name" value="TATA-Binding Protein"/>
    <property type="match status" value="1"/>
</dbReference>
<dbReference type="InterPro" id="IPR011989">
    <property type="entry name" value="ARM-like"/>
</dbReference>
<dbReference type="InterPro" id="IPR016024">
    <property type="entry name" value="ARM-type_fold"/>
</dbReference>
<dbReference type="InterPro" id="IPR002553">
    <property type="entry name" value="Clathrin/coatomer_adapt-like_N"/>
</dbReference>
<dbReference type="InterPro" id="IPR013041">
    <property type="entry name" value="Clathrin_app_Ig-like_sf"/>
</dbReference>
<dbReference type="InterPro" id="IPR009028">
    <property type="entry name" value="Coatomer/calthrin_app_sub_C"/>
</dbReference>
<dbReference type="InterPro" id="IPR032154">
    <property type="entry name" value="Coatomer_g_Cpla"/>
</dbReference>
<dbReference type="InterPro" id="IPR017106">
    <property type="entry name" value="Coatomer_gsu"/>
</dbReference>
<dbReference type="InterPro" id="IPR013040">
    <property type="entry name" value="Coatomer_gsu_app_Ig-like_dom"/>
</dbReference>
<dbReference type="InterPro" id="IPR037067">
    <property type="entry name" value="Coatomer_gsu_app_sf"/>
</dbReference>
<dbReference type="InterPro" id="IPR012295">
    <property type="entry name" value="TBP_dom_sf"/>
</dbReference>
<dbReference type="PANTHER" id="PTHR10261">
    <property type="entry name" value="COATOMER SUBUNIT GAMMA"/>
    <property type="match status" value="1"/>
</dbReference>
<dbReference type="PANTHER" id="PTHR10261:SF0">
    <property type="entry name" value="COATOMER SUBUNIT GAMMA-2"/>
    <property type="match status" value="1"/>
</dbReference>
<dbReference type="Pfam" id="PF01602">
    <property type="entry name" value="Adaptin_N"/>
    <property type="match status" value="1"/>
</dbReference>
<dbReference type="Pfam" id="PF16381">
    <property type="entry name" value="Coatomer_g_Cpla"/>
    <property type="match status" value="1"/>
</dbReference>
<dbReference type="Pfam" id="PF08752">
    <property type="entry name" value="COP-gamma_platf"/>
    <property type="match status" value="1"/>
</dbReference>
<dbReference type="PIRSF" id="PIRSF037093">
    <property type="entry name" value="Coatomer_gamma_subunit"/>
    <property type="match status" value="1"/>
</dbReference>
<dbReference type="SUPFAM" id="SSF48371">
    <property type="entry name" value="ARM repeat"/>
    <property type="match status" value="1"/>
</dbReference>
<dbReference type="SUPFAM" id="SSF49348">
    <property type="entry name" value="Clathrin adaptor appendage domain"/>
    <property type="match status" value="1"/>
</dbReference>
<dbReference type="SUPFAM" id="SSF55711">
    <property type="entry name" value="Subdomain of clathrin and coatomer appendage domain"/>
    <property type="match status" value="1"/>
</dbReference>